<reference key="1">
    <citation type="journal article" date="2009" name="J. Bacteriol.">
        <title>Complete and draft genome sequences of six members of the Aquificales.</title>
        <authorList>
            <person name="Reysenbach A.-L."/>
            <person name="Hamamura N."/>
            <person name="Podar M."/>
            <person name="Griffiths E."/>
            <person name="Ferreira S."/>
            <person name="Hochstein R."/>
            <person name="Heidelberg J."/>
            <person name="Johnson J."/>
            <person name="Mead D."/>
            <person name="Pohorille A."/>
            <person name="Sarmiento M."/>
            <person name="Schweighofer K."/>
            <person name="Seshadri R."/>
            <person name="Voytek M.A."/>
        </authorList>
    </citation>
    <scope>NUCLEOTIDE SEQUENCE [LARGE SCALE GENOMIC DNA]</scope>
    <source>
        <strain>DSM 15241 / OCM 825 / Az-Fu1</strain>
    </source>
</reference>
<comment type="function">
    <text evidence="1">Specifically methylates the N4 position of cytidine in position 1402 (C1402) of 16S rRNA.</text>
</comment>
<comment type="catalytic activity">
    <reaction evidence="1">
        <text>cytidine(1402) in 16S rRNA + S-adenosyl-L-methionine = N(4)-methylcytidine(1402) in 16S rRNA + S-adenosyl-L-homocysteine + H(+)</text>
        <dbReference type="Rhea" id="RHEA:42928"/>
        <dbReference type="Rhea" id="RHEA-COMP:10286"/>
        <dbReference type="Rhea" id="RHEA-COMP:10287"/>
        <dbReference type="ChEBI" id="CHEBI:15378"/>
        <dbReference type="ChEBI" id="CHEBI:57856"/>
        <dbReference type="ChEBI" id="CHEBI:59789"/>
        <dbReference type="ChEBI" id="CHEBI:74506"/>
        <dbReference type="ChEBI" id="CHEBI:82748"/>
        <dbReference type="EC" id="2.1.1.199"/>
    </reaction>
</comment>
<comment type="subcellular location">
    <subcellularLocation>
        <location evidence="1">Cytoplasm</location>
    </subcellularLocation>
</comment>
<comment type="similarity">
    <text evidence="1">Belongs to the methyltransferase superfamily. RsmH family.</text>
</comment>
<keyword id="KW-0963">Cytoplasm</keyword>
<keyword id="KW-0489">Methyltransferase</keyword>
<keyword id="KW-1185">Reference proteome</keyword>
<keyword id="KW-0698">rRNA processing</keyword>
<keyword id="KW-0949">S-adenosyl-L-methionine</keyword>
<keyword id="KW-0808">Transferase</keyword>
<dbReference type="EC" id="2.1.1.199" evidence="1"/>
<dbReference type="EMBL" id="CP001229">
    <property type="protein sequence ID" value="ACN98436.1"/>
    <property type="molecule type" value="Genomic_DNA"/>
</dbReference>
<dbReference type="RefSeq" id="WP_012673761.1">
    <property type="nucleotide sequence ID" value="NC_012438.1"/>
</dbReference>
<dbReference type="SMR" id="C1DTV7"/>
<dbReference type="STRING" id="204536.SULAZ_0554"/>
<dbReference type="KEGG" id="saf:SULAZ_0554"/>
<dbReference type="eggNOG" id="COG0275">
    <property type="taxonomic scope" value="Bacteria"/>
</dbReference>
<dbReference type="HOGENOM" id="CLU_038422_3_0_0"/>
<dbReference type="OrthoDB" id="9806637at2"/>
<dbReference type="Proteomes" id="UP000001369">
    <property type="component" value="Chromosome"/>
</dbReference>
<dbReference type="GO" id="GO:0005737">
    <property type="term" value="C:cytoplasm"/>
    <property type="evidence" value="ECO:0007669"/>
    <property type="project" value="UniProtKB-SubCell"/>
</dbReference>
<dbReference type="GO" id="GO:0071424">
    <property type="term" value="F:rRNA (cytosine-N4-)-methyltransferase activity"/>
    <property type="evidence" value="ECO:0007669"/>
    <property type="project" value="UniProtKB-UniRule"/>
</dbReference>
<dbReference type="GO" id="GO:0070475">
    <property type="term" value="P:rRNA base methylation"/>
    <property type="evidence" value="ECO:0007669"/>
    <property type="project" value="UniProtKB-UniRule"/>
</dbReference>
<dbReference type="FunFam" id="1.10.150.170:FF:000003">
    <property type="entry name" value="Ribosomal RNA small subunit methyltransferase H"/>
    <property type="match status" value="1"/>
</dbReference>
<dbReference type="Gene3D" id="1.10.150.170">
    <property type="entry name" value="Putative methyltransferase TM0872, insert domain"/>
    <property type="match status" value="1"/>
</dbReference>
<dbReference type="Gene3D" id="3.40.50.150">
    <property type="entry name" value="Vaccinia Virus protein VP39"/>
    <property type="match status" value="1"/>
</dbReference>
<dbReference type="HAMAP" id="MF_01007">
    <property type="entry name" value="16SrRNA_methyltr_H"/>
    <property type="match status" value="1"/>
</dbReference>
<dbReference type="InterPro" id="IPR002903">
    <property type="entry name" value="RsmH"/>
</dbReference>
<dbReference type="InterPro" id="IPR023397">
    <property type="entry name" value="SAM-dep_MeTrfase_MraW_recog"/>
</dbReference>
<dbReference type="InterPro" id="IPR029063">
    <property type="entry name" value="SAM-dependent_MTases_sf"/>
</dbReference>
<dbReference type="NCBIfam" id="TIGR00006">
    <property type="entry name" value="16S rRNA (cytosine(1402)-N(4))-methyltransferase RsmH"/>
    <property type="match status" value="1"/>
</dbReference>
<dbReference type="PANTHER" id="PTHR11265:SF0">
    <property type="entry name" value="12S RRNA N4-METHYLCYTIDINE METHYLTRANSFERASE"/>
    <property type="match status" value="1"/>
</dbReference>
<dbReference type="PANTHER" id="PTHR11265">
    <property type="entry name" value="S-ADENOSYL-METHYLTRANSFERASE MRAW"/>
    <property type="match status" value="1"/>
</dbReference>
<dbReference type="Pfam" id="PF01795">
    <property type="entry name" value="Methyltransf_5"/>
    <property type="match status" value="1"/>
</dbReference>
<dbReference type="PIRSF" id="PIRSF004486">
    <property type="entry name" value="MraW"/>
    <property type="match status" value="1"/>
</dbReference>
<dbReference type="SUPFAM" id="SSF81799">
    <property type="entry name" value="Putative methyltransferase TM0872, insert domain"/>
    <property type="match status" value="1"/>
</dbReference>
<dbReference type="SUPFAM" id="SSF53335">
    <property type="entry name" value="S-adenosyl-L-methionine-dependent methyltransferases"/>
    <property type="match status" value="1"/>
</dbReference>
<organism>
    <name type="scientific">Sulfurihydrogenibium azorense (strain DSM 15241 / OCM 825 / Az-Fu1)</name>
    <dbReference type="NCBI Taxonomy" id="204536"/>
    <lineage>
        <taxon>Bacteria</taxon>
        <taxon>Pseudomonadati</taxon>
        <taxon>Aquificota</taxon>
        <taxon>Aquificia</taxon>
        <taxon>Aquificales</taxon>
        <taxon>Hydrogenothermaceae</taxon>
        <taxon>Sulfurihydrogenibium</taxon>
    </lineage>
</organism>
<gene>
    <name evidence="1" type="primary">rsmH</name>
    <name type="synonym">mraW</name>
    <name type="ordered locus">SULAZ_0554</name>
</gene>
<sequence>MVEHYSVLHREVLEFTKDLKEGYFIDATVGGGGHSYLILKQNPKLKIIGVDKDDYALEVAKERLKDFEGRFSLVKSSFKDIDKIVKDLDVNPVVGILFDFGVSHFQLKLPRGFSFQREEPLDMRMDTSSELTAYYVVNYYPESRLFNIISKYGEEKFAKRIAKNIVEYRKKKKIETTKELADIVYRSYPPNLRHSRIHPATKTFQAIRIEVNNELLEIEEALEKAIHIVSKEGIIITISFHSLEDRIVKNTFKKYKELKFLDILTKKPITPKEDEIRENPASRSAKMRVARRL</sequence>
<protein>
    <recommendedName>
        <fullName evidence="1">Ribosomal RNA small subunit methyltransferase H</fullName>
        <ecNumber evidence="1">2.1.1.199</ecNumber>
    </recommendedName>
    <alternativeName>
        <fullName evidence="1">16S rRNA m(4)C1402 methyltransferase</fullName>
    </alternativeName>
    <alternativeName>
        <fullName evidence="1">rRNA (cytosine-N(4)-)-methyltransferase RsmH</fullName>
    </alternativeName>
</protein>
<accession>C1DTV7</accession>
<proteinExistence type="inferred from homology"/>
<feature type="chain" id="PRO_0000387173" description="Ribosomal RNA small subunit methyltransferase H">
    <location>
        <begin position="1"/>
        <end position="293"/>
    </location>
</feature>
<feature type="region of interest" description="Disordered" evidence="2">
    <location>
        <begin position="274"/>
        <end position="293"/>
    </location>
</feature>
<feature type="binding site" evidence="1">
    <location>
        <begin position="32"/>
        <end position="34"/>
    </location>
    <ligand>
        <name>S-adenosyl-L-methionine</name>
        <dbReference type="ChEBI" id="CHEBI:59789"/>
    </ligand>
</feature>
<feature type="binding site" evidence="1">
    <location>
        <position position="51"/>
    </location>
    <ligand>
        <name>S-adenosyl-L-methionine</name>
        <dbReference type="ChEBI" id="CHEBI:59789"/>
    </ligand>
</feature>
<feature type="binding site" evidence="1">
    <location>
        <position position="78"/>
    </location>
    <ligand>
        <name>S-adenosyl-L-methionine</name>
        <dbReference type="ChEBI" id="CHEBI:59789"/>
    </ligand>
</feature>
<feature type="binding site" evidence="1">
    <location>
        <position position="99"/>
    </location>
    <ligand>
        <name>S-adenosyl-L-methionine</name>
        <dbReference type="ChEBI" id="CHEBI:59789"/>
    </ligand>
</feature>
<feature type="binding site" evidence="1">
    <location>
        <position position="106"/>
    </location>
    <ligand>
        <name>S-adenosyl-L-methionine</name>
        <dbReference type="ChEBI" id="CHEBI:59789"/>
    </ligand>
</feature>
<name>RSMH_SULAA</name>
<evidence type="ECO:0000255" key="1">
    <source>
        <dbReference type="HAMAP-Rule" id="MF_01007"/>
    </source>
</evidence>
<evidence type="ECO:0000256" key="2">
    <source>
        <dbReference type="SAM" id="MobiDB-lite"/>
    </source>
</evidence>